<accession>Q5ZK43</accession>
<proteinExistence type="evidence at protein level"/>
<protein>
    <recommendedName>
        <fullName>Trimeric intracellular cation channel type A</fullName>
        <shortName>TRIC-A</shortName>
        <shortName>TRICA</shortName>
    </recommendedName>
    <alternativeName>
        <fullName>Transmembrane protein 38A</fullName>
    </alternativeName>
</protein>
<sequence>MELPGALQLGELAAAFASVPVFPLFDAAYFIVSVLYLKYEPGAVEMSRKSPFASWLCAMLHCFGSYILADLLLGESPIHYFSNNSSVILATAVWYLIFFCPMNLFYKCVSFLPVKLIFVAMKEVVRVRKIAAGVHHAHHQYHHGWFIMMATGWVKGSGVALMSNFEQLLRGVWRPETNEILHMSFPTKASLYGTVLFTLQQTHWLPVSEANLVFFFTMFMIVCKVFMTATHSHASPFAPVEGFICPVFFGSVSSGHTSHHNQHGHSHEASYQPPPPVKSKEELNEGTRKRKAKKAE</sequence>
<dbReference type="EMBL" id="AJ720241">
    <property type="protein sequence ID" value="CAG31900.1"/>
    <property type="molecule type" value="mRNA"/>
</dbReference>
<dbReference type="RefSeq" id="NP_001073226.1">
    <property type="nucleotide sequence ID" value="NM_001079758.1"/>
</dbReference>
<dbReference type="PDB" id="6IYU">
    <property type="method" value="X-ray"/>
    <property type="resolution" value="2.20 A"/>
    <property type="chains" value="A=1-296"/>
</dbReference>
<dbReference type="PDB" id="6IYX">
    <property type="method" value="X-ray"/>
    <property type="resolution" value="1.80 A"/>
    <property type="chains" value="A=1-296"/>
</dbReference>
<dbReference type="PDB" id="6IYZ">
    <property type="method" value="X-ray"/>
    <property type="resolution" value="2.20 A"/>
    <property type="chains" value="A=1-296"/>
</dbReference>
<dbReference type="PDB" id="6IZ0">
    <property type="method" value="X-ray"/>
    <property type="resolution" value="2.30 A"/>
    <property type="chains" value="A=1-296"/>
</dbReference>
<dbReference type="PDB" id="6IZ1">
    <property type="method" value="X-ray"/>
    <property type="resolution" value="2.40 A"/>
    <property type="chains" value="A=1-296"/>
</dbReference>
<dbReference type="PDB" id="6IZF">
    <property type="method" value="X-ray"/>
    <property type="resolution" value="2.00 A"/>
    <property type="chains" value="A=1-296"/>
</dbReference>
<dbReference type="PDBsum" id="6IYU"/>
<dbReference type="PDBsum" id="6IYX"/>
<dbReference type="PDBsum" id="6IYZ"/>
<dbReference type="PDBsum" id="6IZ0"/>
<dbReference type="PDBsum" id="6IZ1"/>
<dbReference type="PDBsum" id="6IZF"/>
<dbReference type="SMR" id="Q5ZK43"/>
<dbReference type="FunCoup" id="Q5ZK43">
    <property type="interactions" value="818"/>
</dbReference>
<dbReference type="STRING" id="9031.ENSGALP00000005984"/>
<dbReference type="PaxDb" id="9031-ENSGALP00000005984"/>
<dbReference type="GeneID" id="771253"/>
<dbReference type="KEGG" id="gga:771253"/>
<dbReference type="CTD" id="79041"/>
<dbReference type="VEuPathDB" id="HostDB:geneid_771253"/>
<dbReference type="eggNOG" id="KOG3944">
    <property type="taxonomic scope" value="Eukaryota"/>
</dbReference>
<dbReference type="InParanoid" id="Q5ZK43"/>
<dbReference type="OrthoDB" id="195817at2759"/>
<dbReference type="PhylomeDB" id="Q5ZK43"/>
<dbReference type="PRO" id="PR:Q5ZK43"/>
<dbReference type="Proteomes" id="UP000000539">
    <property type="component" value="Unassembled WGS sequence"/>
</dbReference>
<dbReference type="GO" id="GO:0031965">
    <property type="term" value="C:nuclear membrane"/>
    <property type="evidence" value="ECO:0000250"/>
    <property type="project" value="UniProtKB"/>
</dbReference>
<dbReference type="GO" id="GO:0033017">
    <property type="term" value="C:sarcoplasmic reticulum membrane"/>
    <property type="evidence" value="ECO:0000250"/>
    <property type="project" value="UniProtKB"/>
</dbReference>
<dbReference type="GO" id="GO:0042802">
    <property type="term" value="F:identical protein binding"/>
    <property type="evidence" value="ECO:0007669"/>
    <property type="project" value="InterPro"/>
</dbReference>
<dbReference type="GO" id="GO:0005267">
    <property type="term" value="F:potassium channel activity"/>
    <property type="evidence" value="ECO:0000314"/>
    <property type="project" value="UniProtKB"/>
</dbReference>
<dbReference type="GO" id="GO:0051279">
    <property type="term" value="P:regulation of release of sequestered calcium ion into cytosol"/>
    <property type="evidence" value="ECO:0000250"/>
    <property type="project" value="UniProtKB"/>
</dbReference>
<dbReference type="InterPro" id="IPR007866">
    <property type="entry name" value="TRIC_channel"/>
</dbReference>
<dbReference type="PANTHER" id="PTHR12454">
    <property type="entry name" value="TRIMERIC INTRACELLULAR CATION CHANNEL"/>
    <property type="match status" value="1"/>
</dbReference>
<dbReference type="PANTHER" id="PTHR12454:SF3">
    <property type="entry name" value="TRIMERIC INTRACELLULAR CATION CHANNEL TYPE A"/>
    <property type="match status" value="1"/>
</dbReference>
<dbReference type="Pfam" id="PF05197">
    <property type="entry name" value="TRIC"/>
    <property type="match status" value="1"/>
</dbReference>
<gene>
    <name type="primary">TMEM38A</name>
    <name type="ORF">RCJMB04_13f15</name>
</gene>
<feature type="chain" id="PRO_0000271070" description="Trimeric intracellular cation channel type A">
    <location>
        <begin position="1"/>
        <end position="296"/>
    </location>
</feature>
<feature type="topological domain" description="Lumenal" evidence="6">
    <location>
        <begin position="1"/>
        <end position="19"/>
    </location>
</feature>
<feature type="transmembrane region" description="Helical;Name=1" evidence="3">
    <location>
        <begin position="20"/>
        <end position="37"/>
    </location>
</feature>
<feature type="topological domain" description="Cytoplasmic" evidence="6">
    <location>
        <begin position="38"/>
        <end position="51"/>
    </location>
</feature>
<feature type="transmembrane region" description="Helical;Name=2" evidence="3">
    <location>
        <begin position="52"/>
        <end position="73"/>
    </location>
</feature>
<feature type="topological domain" description="Lumenal" evidence="6">
    <location>
        <begin position="74"/>
        <end position="85"/>
    </location>
</feature>
<feature type="transmembrane region" description="Helical;Name=3" evidence="3">
    <location>
        <begin position="86"/>
        <end position="103"/>
    </location>
</feature>
<feature type="topological domain" description="Cytoplasmic" evidence="6">
    <location>
        <begin position="104"/>
        <end position="107"/>
    </location>
</feature>
<feature type="transmembrane region" description="Helical;Name=4" evidence="3">
    <location>
        <begin position="108"/>
        <end position="126"/>
    </location>
</feature>
<feature type="topological domain" description="Lumenal" evidence="6">
    <location>
        <begin position="127"/>
        <end position="144"/>
    </location>
</feature>
<feature type="transmembrane region" description="Helical;Name=5" evidence="3">
    <location>
        <begin position="145"/>
        <end position="162"/>
    </location>
</feature>
<feature type="topological domain" description="Cytoplasmic" evidence="6">
    <location>
        <begin position="163"/>
        <end position="183"/>
    </location>
</feature>
<feature type="transmembrane region" description="Helical;Name=6" evidence="3">
    <location>
        <begin position="184"/>
        <end position="201"/>
    </location>
</feature>
<feature type="topological domain" description="Lumenal" evidence="6">
    <location>
        <begin position="202"/>
        <end position="209"/>
    </location>
</feature>
<feature type="transmembrane region" description="Helical;Name=7" evidence="3">
    <location>
        <begin position="210"/>
        <end position="230"/>
    </location>
</feature>
<feature type="topological domain" description="Cytoplasmic" evidence="6">
    <location>
        <begin position="231"/>
        <end position="273"/>
    </location>
</feature>
<feature type="region of interest" description="Disordered" evidence="4">
    <location>
        <begin position="256"/>
        <end position="296"/>
    </location>
</feature>
<feature type="compositionally biased region" description="Basic and acidic residues" evidence="4">
    <location>
        <begin position="278"/>
        <end position="287"/>
    </location>
</feature>
<feature type="binding site" evidence="5 7 8 10 11 12">
    <location>
        <position position="74"/>
    </location>
    <ligand>
        <name>Ca(2+)</name>
        <dbReference type="ChEBI" id="CHEBI:29108"/>
    </ligand>
</feature>
<feature type="binding site" evidence="2">
    <location>
        <position position="122"/>
    </location>
    <ligand>
        <name>a 1,2-diacyl-sn-glycero-3-phospho-(1D-myo-inositol-4,5-bisphosphate)</name>
        <dbReference type="ChEBI" id="CHEBI:58456"/>
    </ligand>
</feature>
<feature type="binding site" evidence="2">
    <location>
        <position position="126"/>
    </location>
    <ligand>
        <name>a 1,2-diacyl-sn-glycero-3-phospho-(1D-myo-inositol-4,5-bisphosphate)</name>
        <dbReference type="ChEBI" id="CHEBI:58456"/>
    </ligand>
</feature>
<feature type="mutagenesis site" description="Pore remains open." evidence="5">
    <original>K</original>
    <variation>A</variation>
    <location>
        <position position="129"/>
    </location>
</feature>
<feature type="mutagenesis site" description="Pore remains closed." evidence="5">
    <original>K</original>
    <variation>Q</variation>
    <location>
        <position position="129"/>
    </location>
</feature>
<feature type="helix" evidence="13">
    <location>
        <begin position="9"/>
        <end position="17"/>
    </location>
</feature>
<feature type="helix" evidence="13">
    <location>
        <begin position="24"/>
        <end position="39"/>
    </location>
</feature>
<feature type="helix" evidence="13">
    <location>
        <begin position="43"/>
        <end position="49"/>
    </location>
</feature>
<feature type="helix" evidence="13">
    <location>
        <begin position="51"/>
        <end position="73"/>
    </location>
</feature>
<feature type="helix" evidence="13">
    <location>
        <begin position="79"/>
        <end position="82"/>
    </location>
</feature>
<feature type="helix" evidence="13">
    <location>
        <begin position="84"/>
        <end position="99"/>
    </location>
</feature>
<feature type="helix" evidence="13">
    <location>
        <begin position="101"/>
        <end position="103"/>
    </location>
</feature>
<feature type="helix" evidence="13">
    <location>
        <begin position="104"/>
        <end position="110"/>
    </location>
</feature>
<feature type="helix" evidence="13">
    <location>
        <begin position="112"/>
        <end position="140"/>
    </location>
</feature>
<feature type="helix" evidence="13">
    <location>
        <begin position="145"/>
        <end position="157"/>
    </location>
</feature>
<feature type="helix" evidence="13">
    <location>
        <begin position="158"/>
        <end position="162"/>
    </location>
</feature>
<feature type="helix" evidence="13">
    <location>
        <begin position="163"/>
        <end position="169"/>
    </location>
</feature>
<feature type="turn" evidence="13">
    <location>
        <begin position="179"/>
        <end position="181"/>
    </location>
</feature>
<feature type="helix" evidence="13">
    <location>
        <begin position="185"/>
        <end position="201"/>
    </location>
</feature>
<feature type="helix" evidence="13">
    <location>
        <begin position="209"/>
        <end position="230"/>
    </location>
</feature>
<reference key="1">
    <citation type="journal article" date="2005" name="Genome Biol.">
        <title>Full-length cDNAs from chicken bursal lymphocytes to facilitate gene function analysis.</title>
        <authorList>
            <person name="Caldwell R.B."/>
            <person name="Kierzek A.M."/>
            <person name="Arakawa H."/>
            <person name="Bezzubov Y."/>
            <person name="Zaim J."/>
            <person name="Fiedler P."/>
            <person name="Kutter S."/>
            <person name="Blagodatski A."/>
            <person name="Kostovska D."/>
            <person name="Koter M."/>
            <person name="Plachy J."/>
            <person name="Carninci P."/>
            <person name="Hayashizaki Y."/>
            <person name="Buerstedde J.-M."/>
        </authorList>
    </citation>
    <scope>NUCLEOTIDE SEQUENCE [LARGE SCALE MRNA]</scope>
    <source>
        <strain>CB</strain>
        <tissue>Bursa of Fabricius</tissue>
    </source>
</reference>
<reference evidence="7 8 9 10 11 12" key="2">
    <citation type="journal article" date="2019" name="Proc. Natl. Acad. Sci. U.S.A.">
        <title>Structural basis for activity of TRIC counter-ion channels in calcium release.</title>
        <authorList>
            <person name="Wang X.H."/>
            <person name="Su M."/>
            <person name="Gao F."/>
            <person name="Xie W."/>
            <person name="Zeng Y."/>
            <person name="Li D.L."/>
            <person name="Liu X.L."/>
            <person name="Zhao H."/>
            <person name="Qin L."/>
            <person name="Li F."/>
            <person name="Liu Q."/>
            <person name="Clarke O.B."/>
            <person name="Lam S.M."/>
            <person name="Shui G.H."/>
            <person name="Hendrickson W.A."/>
            <person name="Chen Y.H."/>
        </authorList>
    </citation>
    <scope>X-RAY CRYSTALLOGRAPHY (1.80 ANGSTROMS) IN COMPLEX WITH CA(2+)</scope>
    <scope>SUBUNIT</scope>
    <scope>FUNCTION</scope>
    <scope>CATALYTIC ACTIVITY</scope>
    <scope>ACTIVITY REGULATION</scope>
    <scope>MUTAGENESIS OF LYS-129</scope>
</reference>
<organism>
    <name type="scientific">Gallus gallus</name>
    <name type="common">Chicken</name>
    <dbReference type="NCBI Taxonomy" id="9031"/>
    <lineage>
        <taxon>Eukaryota</taxon>
        <taxon>Metazoa</taxon>
        <taxon>Chordata</taxon>
        <taxon>Craniata</taxon>
        <taxon>Vertebrata</taxon>
        <taxon>Euteleostomi</taxon>
        <taxon>Archelosauria</taxon>
        <taxon>Archosauria</taxon>
        <taxon>Dinosauria</taxon>
        <taxon>Saurischia</taxon>
        <taxon>Theropoda</taxon>
        <taxon>Coelurosauria</taxon>
        <taxon>Aves</taxon>
        <taxon>Neognathae</taxon>
        <taxon>Galloanserae</taxon>
        <taxon>Galliformes</taxon>
        <taxon>Phasianidae</taxon>
        <taxon>Phasianinae</taxon>
        <taxon>Gallus</taxon>
    </lineage>
</organism>
<comment type="function">
    <text evidence="5">Intracellular monovalent cation channel required for maintenance of rapid intracellular calcium release. Acts as a potassium counter-ion channel that functions in synchronization with calcium release from intracellular stores (PubMed:30770441). Opened by a change of voltage within the sarcoplasmic reticulum lumen (PubMed:30770441).</text>
</comment>
<comment type="catalytic activity">
    <reaction evidence="5">
        <text>K(+)(in) = K(+)(out)</text>
        <dbReference type="Rhea" id="RHEA:29463"/>
        <dbReference type="ChEBI" id="CHEBI:29103"/>
    </reaction>
</comment>
<comment type="activity regulation">
    <text evidence="5">Channel activity is activated by a change of voltage within the sarcoplasmic reticulum lumen and blocked by luminal high Ca(2+) levels (PubMed:30770441).</text>
</comment>
<comment type="subunit">
    <text evidence="5">Homotrimer; conformation seems to be controled by binding to diacylglycerol (DAG).</text>
</comment>
<comment type="subcellular location">
    <subcellularLocation>
        <location evidence="1">Sarcoplasmic reticulum membrane</location>
        <topology evidence="1">Multi-pass membrane protein</topology>
    </subcellularLocation>
    <subcellularLocation>
        <location evidence="1">Nucleus membrane</location>
    </subcellularLocation>
</comment>
<comment type="similarity">
    <text evidence="6">Belongs to the TMEM38 family.</text>
</comment>
<keyword id="KW-0002">3D-structure</keyword>
<keyword id="KW-0407">Ion channel</keyword>
<keyword id="KW-0406">Ion transport</keyword>
<keyword id="KW-0472">Membrane</keyword>
<keyword id="KW-0539">Nucleus</keyword>
<keyword id="KW-0630">Potassium</keyword>
<keyword id="KW-0631">Potassium channel</keyword>
<keyword id="KW-0633">Potassium transport</keyword>
<keyword id="KW-1185">Reference proteome</keyword>
<keyword id="KW-0703">Sarcoplasmic reticulum</keyword>
<keyword id="KW-0812">Transmembrane</keyword>
<keyword id="KW-1133">Transmembrane helix</keyword>
<keyword id="KW-0813">Transport</keyword>
<evidence type="ECO:0000250" key="1">
    <source>
        <dbReference type="UniProtKB" id="A5A6S6"/>
    </source>
</evidence>
<evidence type="ECO:0000250" key="2">
    <source>
        <dbReference type="UniProtKB" id="Q9NA73"/>
    </source>
</evidence>
<evidence type="ECO:0000255" key="3"/>
<evidence type="ECO:0000256" key="4">
    <source>
        <dbReference type="SAM" id="MobiDB-lite"/>
    </source>
</evidence>
<evidence type="ECO:0000269" key="5">
    <source>
    </source>
</evidence>
<evidence type="ECO:0000305" key="6"/>
<evidence type="ECO:0007744" key="7">
    <source>
        <dbReference type="PDB" id="6IYU"/>
    </source>
</evidence>
<evidence type="ECO:0007744" key="8">
    <source>
        <dbReference type="PDB" id="6IYX"/>
    </source>
</evidence>
<evidence type="ECO:0007744" key="9">
    <source>
        <dbReference type="PDB" id="6IYZ"/>
    </source>
</evidence>
<evidence type="ECO:0007744" key="10">
    <source>
        <dbReference type="PDB" id="6IZ0"/>
    </source>
</evidence>
<evidence type="ECO:0007744" key="11">
    <source>
        <dbReference type="PDB" id="6IZ1"/>
    </source>
</evidence>
<evidence type="ECO:0007744" key="12">
    <source>
        <dbReference type="PDB" id="6IZF"/>
    </source>
</evidence>
<evidence type="ECO:0007829" key="13">
    <source>
        <dbReference type="PDB" id="6IYX"/>
    </source>
</evidence>
<name>TM38A_CHICK</name>